<reference key="1">
    <citation type="journal article" date="1984" name="J. Biol. Chem.">
        <title>Sequences of six genes and several open reading frames in the kinetoplast maxicircle DNA of Leishmania tarentolae.</title>
        <authorList>
            <person name="de la Cruz V.F."/>
            <person name="Neckelmann N."/>
            <person name="Simpson L."/>
        </authorList>
    </citation>
    <scope>NUCLEOTIDE SEQUENCE</scope>
</reference>
<name>COX1_LEITA</name>
<sequence length="549" mass="63272">MFWLCLVCLSVSHKMIGLCYLLVAILSGFVGYVYSLFIRLELSLIGCGILFGDYQFYNVLITSHGLIMVFAFIMPVMMGGLVNYFIPVMAGFPDMVFPRLNNMSFWMYLAGFGCVVNGFLTEEGMGVGWTLYPTLICIDFHSSLACDFVMFAVHLLGISSILNSINLLGTLFCCRRKFFSFLSWSLFIWAALITAILLIITLPVLAGGVTLILCDRNFNTSFYDVVGGGDLILFQHIFWFFGHPEVYIILLPVFGLISTIVEVIGFRCVFSTVAMIYSMILIAILGMFVWAHHMFVVGMDVDSRAYFGGVSILIGLPTCVKLFNWIYSFLYTDMIITFEVYFVIMFIFMFLIGAVTGLFLSNVGIDIMLHDTYFVVGHFHYVLSLGAVVGFFTGFIHFLAKWLPIELYLFWMFYFISTLFIGSNMLFFPMHSLGMYAFPRRISDYPVSFLFWSSFMLYGMLLLASLILFLCALFCVFLFWDYCLFFVSLFVFSLYCFFYFSTWLPCVMVLYLLLVDFAHIVLDYLFLILCFCFVFFIFFWQSLFLFFYI</sequence>
<geneLocation type="mitochondrion"/>
<dbReference type="EC" id="7.1.1.9"/>
<dbReference type="PIR" id="D30010">
    <property type="entry name" value="D30010"/>
</dbReference>
<dbReference type="SMR" id="P14544"/>
<dbReference type="UniPathway" id="UPA00705"/>
<dbReference type="GO" id="GO:0005743">
    <property type="term" value="C:mitochondrial inner membrane"/>
    <property type="evidence" value="ECO:0007669"/>
    <property type="project" value="UniProtKB-SubCell"/>
</dbReference>
<dbReference type="GO" id="GO:0004129">
    <property type="term" value="F:cytochrome-c oxidase activity"/>
    <property type="evidence" value="ECO:0007669"/>
    <property type="project" value="UniProtKB-EC"/>
</dbReference>
<dbReference type="GO" id="GO:0020037">
    <property type="term" value="F:heme binding"/>
    <property type="evidence" value="ECO:0007669"/>
    <property type="project" value="InterPro"/>
</dbReference>
<dbReference type="GO" id="GO:0046872">
    <property type="term" value="F:metal ion binding"/>
    <property type="evidence" value="ECO:0007669"/>
    <property type="project" value="UniProtKB-KW"/>
</dbReference>
<dbReference type="GO" id="GO:0015990">
    <property type="term" value="P:electron transport coupled proton transport"/>
    <property type="evidence" value="ECO:0007669"/>
    <property type="project" value="TreeGrafter"/>
</dbReference>
<dbReference type="GO" id="GO:0006123">
    <property type="term" value="P:mitochondrial electron transport, cytochrome c to oxygen"/>
    <property type="evidence" value="ECO:0007669"/>
    <property type="project" value="TreeGrafter"/>
</dbReference>
<dbReference type="Gene3D" id="1.20.210.10">
    <property type="entry name" value="Cytochrome c oxidase-like, subunit I domain"/>
    <property type="match status" value="1"/>
</dbReference>
<dbReference type="InterPro" id="IPR023616">
    <property type="entry name" value="Cyt_c_oxase-like_su1_dom"/>
</dbReference>
<dbReference type="InterPro" id="IPR036927">
    <property type="entry name" value="Cyt_c_oxase-like_su1_sf"/>
</dbReference>
<dbReference type="InterPro" id="IPR000883">
    <property type="entry name" value="Cyt_C_Oxase_1"/>
</dbReference>
<dbReference type="InterPro" id="IPR023615">
    <property type="entry name" value="Cyt_c_Oxase_su1_BS"/>
</dbReference>
<dbReference type="PANTHER" id="PTHR10422">
    <property type="entry name" value="CYTOCHROME C OXIDASE SUBUNIT 1"/>
    <property type="match status" value="1"/>
</dbReference>
<dbReference type="PANTHER" id="PTHR10422:SF18">
    <property type="entry name" value="CYTOCHROME C OXIDASE SUBUNIT 1"/>
    <property type="match status" value="1"/>
</dbReference>
<dbReference type="Pfam" id="PF00115">
    <property type="entry name" value="COX1"/>
    <property type="match status" value="1"/>
</dbReference>
<dbReference type="PRINTS" id="PR01165">
    <property type="entry name" value="CYCOXIDASEI"/>
</dbReference>
<dbReference type="SUPFAM" id="SSF81442">
    <property type="entry name" value="Cytochrome c oxidase subunit I-like"/>
    <property type="match status" value="1"/>
</dbReference>
<dbReference type="PROSITE" id="PS50855">
    <property type="entry name" value="COX1"/>
    <property type="match status" value="1"/>
</dbReference>
<dbReference type="PROSITE" id="PS00077">
    <property type="entry name" value="COX1_CUB"/>
    <property type="match status" value="1"/>
</dbReference>
<feature type="chain" id="PRO_0000183350" description="Cytochrome c oxidase subunit 1">
    <location>
        <begin position="1"/>
        <end position="549"/>
    </location>
</feature>
<feature type="transmembrane region" description="Helical" evidence="3">
    <location>
        <begin position="18"/>
        <end position="38"/>
    </location>
</feature>
<feature type="transmembrane region" description="Helical" evidence="3">
    <location>
        <begin position="42"/>
        <end position="62"/>
    </location>
</feature>
<feature type="transmembrane region" description="Helical" evidence="3">
    <location>
        <begin position="66"/>
        <end position="86"/>
    </location>
</feature>
<feature type="transmembrane region" description="Helical" evidence="3">
    <location>
        <begin position="100"/>
        <end position="120"/>
    </location>
</feature>
<feature type="transmembrane region" description="Helical" evidence="3">
    <location>
        <begin position="148"/>
        <end position="168"/>
    </location>
</feature>
<feature type="transmembrane region" description="Helical" evidence="3">
    <location>
        <begin position="186"/>
        <end position="206"/>
    </location>
</feature>
<feature type="transmembrane region" description="Helical" evidence="3">
    <location>
        <begin position="222"/>
        <end position="242"/>
    </location>
</feature>
<feature type="transmembrane region" description="Helical" evidence="3">
    <location>
        <begin position="246"/>
        <end position="266"/>
    </location>
</feature>
<feature type="transmembrane region" description="Helical" evidence="3">
    <location>
        <begin position="269"/>
        <end position="289"/>
    </location>
</feature>
<feature type="transmembrane region" description="Helical" evidence="3">
    <location>
        <begin position="306"/>
        <end position="326"/>
    </location>
</feature>
<feature type="transmembrane region" description="Helical" evidence="3">
    <location>
        <begin position="340"/>
        <end position="360"/>
    </location>
</feature>
<feature type="transmembrane region" description="Helical" evidence="3">
    <location>
        <begin position="379"/>
        <end position="399"/>
    </location>
</feature>
<feature type="transmembrane region" description="Helical" evidence="3">
    <location>
        <begin position="402"/>
        <end position="422"/>
    </location>
</feature>
<feature type="transmembrane region" description="Helical" evidence="3">
    <location>
        <begin position="460"/>
        <end position="480"/>
    </location>
</feature>
<feature type="transmembrane region" description="Helical" evidence="3">
    <location>
        <begin position="484"/>
        <end position="504"/>
    </location>
</feature>
<feature type="transmembrane region" description="Helical" evidence="3">
    <location>
        <begin position="520"/>
        <end position="540"/>
    </location>
</feature>
<feature type="binding site" evidence="2">
    <location>
        <position position="41"/>
    </location>
    <ligand>
        <name>Ca(2+)</name>
        <dbReference type="ChEBI" id="CHEBI:29108"/>
    </ligand>
</feature>
<feature type="binding site" evidence="2">
    <location>
        <position position="46"/>
    </location>
    <ligand>
        <name>Ca(2+)</name>
        <dbReference type="ChEBI" id="CHEBI:29108"/>
    </ligand>
</feature>
<feature type="binding site" description="axial binding residue" evidence="2">
    <location>
        <position position="64"/>
    </location>
    <ligand>
        <name>Fe(II)-heme a</name>
        <dbReference type="ChEBI" id="CHEBI:61715"/>
        <note>low-spin</note>
    </ligand>
    <ligandPart>
        <name>Fe</name>
        <dbReference type="ChEBI" id="CHEBI:18248"/>
    </ligandPart>
</feature>
<feature type="binding site" evidence="2">
    <location>
        <position position="243"/>
    </location>
    <ligand>
        <name>Cu cation</name>
        <dbReference type="ChEBI" id="CHEBI:23378"/>
        <label>B</label>
    </ligand>
</feature>
<feature type="binding site" evidence="1">
    <location>
        <position position="247"/>
    </location>
    <ligand>
        <name>O2</name>
        <dbReference type="ChEBI" id="CHEBI:15379"/>
    </ligand>
</feature>
<feature type="binding site" evidence="2">
    <location>
        <position position="292"/>
    </location>
    <ligand>
        <name>Cu cation</name>
        <dbReference type="ChEBI" id="CHEBI:23378"/>
        <label>B</label>
    </ligand>
</feature>
<feature type="binding site" evidence="2">
    <location>
        <position position="293"/>
    </location>
    <ligand>
        <name>Cu cation</name>
        <dbReference type="ChEBI" id="CHEBI:23378"/>
        <label>B</label>
    </ligand>
</feature>
<feature type="binding site" evidence="2">
    <location>
        <position position="370"/>
    </location>
    <ligand>
        <name>Mg(2+)</name>
        <dbReference type="ChEBI" id="CHEBI:18420"/>
        <note>ligand shared with subunit 2</note>
    </ligand>
</feature>
<feature type="binding site" evidence="2">
    <location>
        <position position="371"/>
    </location>
    <ligand>
        <name>Mg(2+)</name>
        <dbReference type="ChEBI" id="CHEBI:18420"/>
        <note>ligand shared with subunit 2</note>
    </ligand>
</feature>
<feature type="binding site" description="axial binding residue" evidence="2">
    <location>
        <position position="378"/>
    </location>
    <ligand>
        <name>heme a3</name>
        <dbReference type="ChEBI" id="CHEBI:83282"/>
        <note>high-spin</note>
    </ligand>
    <ligandPart>
        <name>Fe</name>
        <dbReference type="ChEBI" id="CHEBI:18248"/>
    </ligandPart>
</feature>
<feature type="binding site" description="axial binding residue" evidence="2">
    <location>
        <position position="380"/>
    </location>
    <ligand>
        <name>Fe(II)-heme a</name>
        <dbReference type="ChEBI" id="CHEBI:61715"/>
        <note>low-spin</note>
    </ligand>
    <ligandPart>
        <name>Fe</name>
        <dbReference type="ChEBI" id="CHEBI:18248"/>
    </ligandPart>
</feature>
<feature type="cross-link" description="1'-histidyl-3'-tyrosine (His-Tyr)" evidence="2">
    <location>
        <begin position="243"/>
        <end position="247"/>
    </location>
</feature>
<protein>
    <recommendedName>
        <fullName>Cytochrome c oxidase subunit 1</fullName>
        <ecNumber>7.1.1.9</ecNumber>
    </recommendedName>
    <alternativeName>
        <fullName>Cytochrome c oxidase polypeptide I</fullName>
    </alternativeName>
</protein>
<comment type="function">
    <text evidence="2">Component of the cytochrome c oxidase, the last enzyme in the mitochondrial electron transport chain which drives oxidative phosphorylation. The respiratory chain contains 3 multisubunit complexes succinate dehydrogenase (complex II, CII), ubiquinol-cytochrome c oxidoreductase (cytochrome b-c1 complex, complex III, CIII) and cytochrome c oxidase (complex IV, CIV), that cooperate to transfer electrons derived from NADH and succinate to molecular oxygen, creating an electrochemical gradient over the inner membrane that drives transmembrane transport and the ATP synthase. Cytochrome c oxidase is the component of the respiratory chain that catalyzes the reduction of oxygen to water. Electrons originating from reduced cytochrome c in the intermembrane space (IMS) are transferred via the dinuclear copper A center (CU(A)) of subunit 2 and heme A of subunit 1 to the active site in subunit 1, a binuclear center (BNC) formed by heme A3 and copper B (CU(B)). The BNC reduces molecular oxygen to 2 water molecules using 4 electrons from cytochrome c in the IMS and 4 protons from the mitochondrial matrix.</text>
</comment>
<comment type="catalytic activity">
    <reaction evidence="2">
        <text>4 Fe(II)-[cytochrome c] + O2 + 8 H(+)(in) = 4 Fe(III)-[cytochrome c] + 2 H2O + 4 H(+)(out)</text>
        <dbReference type="Rhea" id="RHEA:11436"/>
        <dbReference type="Rhea" id="RHEA-COMP:10350"/>
        <dbReference type="Rhea" id="RHEA-COMP:14399"/>
        <dbReference type="ChEBI" id="CHEBI:15377"/>
        <dbReference type="ChEBI" id="CHEBI:15378"/>
        <dbReference type="ChEBI" id="CHEBI:15379"/>
        <dbReference type="ChEBI" id="CHEBI:29033"/>
        <dbReference type="ChEBI" id="CHEBI:29034"/>
        <dbReference type="EC" id="7.1.1.9"/>
    </reaction>
    <physiologicalReaction direction="left-to-right" evidence="2">
        <dbReference type="Rhea" id="RHEA:11437"/>
    </physiologicalReaction>
</comment>
<comment type="cofactor">
    <cofactor evidence="2">
        <name>heme</name>
        <dbReference type="ChEBI" id="CHEBI:30413"/>
    </cofactor>
    <text evidence="2">Binds 2 heme A groups non-covalently per subunit.</text>
</comment>
<comment type="cofactor">
    <cofactor evidence="2">
        <name>Cu cation</name>
        <dbReference type="ChEBI" id="CHEBI:23378"/>
    </cofactor>
    <text evidence="2">Binds a copper B center.</text>
</comment>
<comment type="pathway">
    <text evidence="2">Energy metabolism; oxidative phosphorylation.</text>
</comment>
<comment type="subunit">
    <text evidence="2">Component of the cytochrome c oxidase (complex IV, CIV), a multisubunit enzyme composed of a catalytic core of 3 subunits and several supernumerary subunits. The complex exists as a monomer or a dimer and forms supercomplexes (SCs) in the inner mitochondrial membrane with ubiquinol-cytochrome c oxidoreductase (cytochrome b-c1 complex, complex III, CIII).</text>
</comment>
<comment type="subcellular location">
    <subcellularLocation>
        <location evidence="2">Mitochondrion inner membrane</location>
        <topology evidence="2">Multi-pass membrane protein</topology>
    </subcellularLocation>
</comment>
<comment type="similarity">
    <text evidence="4">Belongs to the heme-copper respiratory oxidase family.</text>
</comment>
<gene>
    <name type="primary">COI</name>
</gene>
<organism>
    <name type="scientific">Leishmania tarentolae</name>
    <name type="common">Sauroleishmania tarentolae</name>
    <dbReference type="NCBI Taxonomy" id="5689"/>
    <lineage>
        <taxon>Eukaryota</taxon>
        <taxon>Discoba</taxon>
        <taxon>Euglenozoa</taxon>
        <taxon>Kinetoplastea</taxon>
        <taxon>Metakinetoplastina</taxon>
        <taxon>Trypanosomatida</taxon>
        <taxon>Trypanosomatidae</taxon>
        <taxon>Leishmaniinae</taxon>
        <taxon>Leishmania</taxon>
        <taxon>lizard Leishmania</taxon>
    </lineage>
</organism>
<proteinExistence type="inferred from homology"/>
<accession>P14544</accession>
<keyword id="KW-0106">Calcium</keyword>
<keyword id="KW-0186">Copper</keyword>
<keyword id="KW-0249">Electron transport</keyword>
<keyword id="KW-0349">Heme</keyword>
<keyword id="KW-0408">Iron</keyword>
<keyword id="KW-0460">Magnesium</keyword>
<keyword id="KW-0472">Membrane</keyword>
<keyword id="KW-0479">Metal-binding</keyword>
<keyword id="KW-0496">Mitochondrion</keyword>
<keyword id="KW-0999">Mitochondrion inner membrane</keyword>
<keyword id="KW-0679">Respiratory chain</keyword>
<keyword id="KW-1278">Translocase</keyword>
<keyword id="KW-0812">Transmembrane</keyword>
<keyword id="KW-1133">Transmembrane helix</keyword>
<keyword id="KW-0813">Transport</keyword>
<evidence type="ECO:0000250" key="1">
    <source>
        <dbReference type="UniProtKB" id="P00396"/>
    </source>
</evidence>
<evidence type="ECO:0000250" key="2">
    <source>
        <dbReference type="UniProtKB" id="P00401"/>
    </source>
</evidence>
<evidence type="ECO:0000255" key="3"/>
<evidence type="ECO:0000305" key="4"/>